<gene>
    <name type="primary">NUP85</name>
    <name type="synonym">NUP75</name>
    <name type="synonym">PCNT1</name>
</gene>
<reference key="1">
    <citation type="journal article" date="2002" name="J. Cell Biol.">
        <title>Proteomic analysis of the mammalian nuclear pore complex.</title>
        <authorList>
            <person name="Cronshaw J.M."/>
            <person name="Krutchinsky A.N."/>
            <person name="Zhang W."/>
            <person name="Chait B.T."/>
            <person name="Matunis M.J."/>
        </authorList>
    </citation>
    <scope>NUCLEOTIDE SEQUENCE [MRNA] (ISOFORM 1)</scope>
    <scope>SUBCELLULAR LOCATION</scope>
    <scope>IDENTIFICATION IN THE NUCLEAR PORE COMPLEX</scope>
</reference>
<reference key="2">
    <citation type="journal article" date="2005" name="Nat. Immunol.">
        <title>Pivotal function for cytoplasmic protein FROUNT in CCR2-mediated monocyte chemotaxis.</title>
        <authorList>
            <person name="Terashima Y."/>
            <person name="Onai N."/>
            <person name="Murai M."/>
            <person name="Enomoto M."/>
            <person name="Poonpiriya V."/>
            <person name="Hamada T."/>
            <person name="Motomura K."/>
            <person name="Suwa M."/>
            <person name="Ezaki T."/>
            <person name="Haga T."/>
            <person name="Kanegasaki S."/>
            <person name="Matsushima K."/>
        </authorList>
    </citation>
    <scope>NUCLEOTIDE SEQUENCE [MRNA] (ISOFORM 1)</scope>
    <scope>FUNCTION IN CCR2 SIGNALING</scope>
    <scope>INTERACTION WITH CCR2</scope>
    <scope>SUBCELLULAR LOCATION</scope>
</reference>
<reference key="3">
    <citation type="journal article" date="2004" name="Nat. Genet.">
        <title>Complete sequencing and characterization of 21,243 full-length human cDNAs.</title>
        <authorList>
            <person name="Ota T."/>
            <person name="Suzuki Y."/>
            <person name="Nishikawa T."/>
            <person name="Otsuki T."/>
            <person name="Sugiyama T."/>
            <person name="Irie R."/>
            <person name="Wakamatsu A."/>
            <person name="Hayashi K."/>
            <person name="Sato H."/>
            <person name="Nagai K."/>
            <person name="Kimura K."/>
            <person name="Makita H."/>
            <person name="Sekine M."/>
            <person name="Obayashi M."/>
            <person name="Nishi T."/>
            <person name="Shibahara T."/>
            <person name="Tanaka T."/>
            <person name="Ishii S."/>
            <person name="Yamamoto J."/>
            <person name="Saito K."/>
            <person name="Kawai Y."/>
            <person name="Isono Y."/>
            <person name="Nakamura Y."/>
            <person name="Nagahari K."/>
            <person name="Murakami K."/>
            <person name="Yasuda T."/>
            <person name="Iwayanagi T."/>
            <person name="Wagatsuma M."/>
            <person name="Shiratori A."/>
            <person name="Sudo H."/>
            <person name="Hosoiri T."/>
            <person name="Kaku Y."/>
            <person name="Kodaira H."/>
            <person name="Kondo H."/>
            <person name="Sugawara M."/>
            <person name="Takahashi M."/>
            <person name="Kanda K."/>
            <person name="Yokoi T."/>
            <person name="Furuya T."/>
            <person name="Kikkawa E."/>
            <person name="Omura Y."/>
            <person name="Abe K."/>
            <person name="Kamihara K."/>
            <person name="Katsuta N."/>
            <person name="Sato K."/>
            <person name="Tanikawa M."/>
            <person name="Yamazaki M."/>
            <person name="Ninomiya K."/>
            <person name="Ishibashi T."/>
            <person name="Yamashita H."/>
            <person name="Murakawa K."/>
            <person name="Fujimori K."/>
            <person name="Tanai H."/>
            <person name="Kimata M."/>
            <person name="Watanabe M."/>
            <person name="Hiraoka S."/>
            <person name="Chiba Y."/>
            <person name="Ishida S."/>
            <person name="Ono Y."/>
            <person name="Takiguchi S."/>
            <person name="Watanabe S."/>
            <person name="Yosida M."/>
            <person name="Hotuta T."/>
            <person name="Kusano J."/>
            <person name="Kanehori K."/>
            <person name="Takahashi-Fujii A."/>
            <person name="Hara H."/>
            <person name="Tanase T.-O."/>
            <person name="Nomura Y."/>
            <person name="Togiya S."/>
            <person name="Komai F."/>
            <person name="Hara R."/>
            <person name="Takeuchi K."/>
            <person name="Arita M."/>
            <person name="Imose N."/>
            <person name="Musashino K."/>
            <person name="Yuuki H."/>
            <person name="Oshima A."/>
            <person name="Sasaki N."/>
            <person name="Aotsuka S."/>
            <person name="Yoshikawa Y."/>
            <person name="Matsunawa H."/>
            <person name="Ichihara T."/>
            <person name="Shiohata N."/>
            <person name="Sano S."/>
            <person name="Moriya S."/>
            <person name="Momiyama H."/>
            <person name="Satoh N."/>
            <person name="Takami S."/>
            <person name="Terashima Y."/>
            <person name="Suzuki O."/>
            <person name="Nakagawa S."/>
            <person name="Senoh A."/>
            <person name="Mizoguchi H."/>
            <person name="Goto Y."/>
            <person name="Shimizu F."/>
            <person name="Wakebe H."/>
            <person name="Hishigaki H."/>
            <person name="Watanabe T."/>
            <person name="Sugiyama A."/>
            <person name="Takemoto M."/>
            <person name="Kawakami B."/>
            <person name="Yamazaki M."/>
            <person name="Watanabe K."/>
            <person name="Kumagai A."/>
            <person name="Itakura S."/>
            <person name="Fukuzumi Y."/>
            <person name="Fujimori Y."/>
            <person name="Komiyama M."/>
            <person name="Tashiro H."/>
            <person name="Tanigami A."/>
            <person name="Fujiwara T."/>
            <person name="Ono T."/>
            <person name="Yamada K."/>
            <person name="Fujii Y."/>
            <person name="Ozaki K."/>
            <person name="Hirao M."/>
            <person name="Ohmori Y."/>
            <person name="Kawabata A."/>
            <person name="Hikiji T."/>
            <person name="Kobatake N."/>
            <person name="Inagaki H."/>
            <person name="Ikema Y."/>
            <person name="Okamoto S."/>
            <person name="Okitani R."/>
            <person name="Kawakami T."/>
            <person name="Noguchi S."/>
            <person name="Itoh T."/>
            <person name="Shigeta K."/>
            <person name="Senba T."/>
            <person name="Matsumura K."/>
            <person name="Nakajima Y."/>
            <person name="Mizuno T."/>
            <person name="Morinaga M."/>
            <person name="Sasaki M."/>
            <person name="Togashi T."/>
            <person name="Oyama M."/>
            <person name="Hata H."/>
            <person name="Watanabe M."/>
            <person name="Komatsu T."/>
            <person name="Mizushima-Sugano J."/>
            <person name="Satoh T."/>
            <person name="Shirai Y."/>
            <person name="Takahashi Y."/>
            <person name="Nakagawa K."/>
            <person name="Okumura K."/>
            <person name="Nagase T."/>
            <person name="Nomura N."/>
            <person name="Kikuchi H."/>
            <person name="Masuho Y."/>
            <person name="Yamashita R."/>
            <person name="Nakai K."/>
            <person name="Yada T."/>
            <person name="Nakamura Y."/>
            <person name="Ohara O."/>
            <person name="Isogai T."/>
            <person name="Sugano S."/>
        </authorList>
    </citation>
    <scope>NUCLEOTIDE SEQUENCE [LARGE SCALE MRNA] (ISOFORMS 1 AND 2)</scope>
</reference>
<reference key="4">
    <citation type="journal article" date="2007" name="BMC Genomics">
        <title>The full-ORF clone resource of the German cDNA consortium.</title>
        <authorList>
            <person name="Bechtel S."/>
            <person name="Rosenfelder H."/>
            <person name="Duda A."/>
            <person name="Schmidt C.P."/>
            <person name="Ernst U."/>
            <person name="Wellenreuther R."/>
            <person name="Mehrle A."/>
            <person name="Schuster C."/>
            <person name="Bahr A."/>
            <person name="Bloecker H."/>
            <person name="Heubner D."/>
            <person name="Hoerlein A."/>
            <person name="Michel G."/>
            <person name="Wedler H."/>
            <person name="Koehrer K."/>
            <person name="Ottenwaelder B."/>
            <person name="Poustka A."/>
            <person name="Wiemann S."/>
            <person name="Schupp I."/>
        </authorList>
    </citation>
    <scope>NUCLEOTIDE SEQUENCE [LARGE SCALE MRNA] (ISOFORM 1)</scope>
    <source>
        <tissue>Testis</tissue>
    </source>
</reference>
<reference key="5">
    <citation type="journal article" date="2006" name="Nature">
        <title>DNA sequence of human chromosome 17 and analysis of rearrangement in the human lineage.</title>
        <authorList>
            <person name="Zody M.C."/>
            <person name="Garber M."/>
            <person name="Adams D.J."/>
            <person name="Sharpe T."/>
            <person name="Harrow J."/>
            <person name="Lupski J.R."/>
            <person name="Nicholson C."/>
            <person name="Searle S.M."/>
            <person name="Wilming L."/>
            <person name="Young S.K."/>
            <person name="Abouelleil A."/>
            <person name="Allen N.R."/>
            <person name="Bi W."/>
            <person name="Bloom T."/>
            <person name="Borowsky M.L."/>
            <person name="Bugalter B.E."/>
            <person name="Butler J."/>
            <person name="Chang J.L."/>
            <person name="Chen C.-K."/>
            <person name="Cook A."/>
            <person name="Corum B."/>
            <person name="Cuomo C.A."/>
            <person name="de Jong P.J."/>
            <person name="DeCaprio D."/>
            <person name="Dewar K."/>
            <person name="FitzGerald M."/>
            <person name="Gilbert J."/>
            <person name="Gibson R."/>
            <person name="Gnerre S."/>
            <person name="Goldstein S."/>
            <person name="Grafham D.V."/>
            <person name="Grocock R."/>
            <person name="Hafez N."/>
            <person name="Hagopian D.S."/>
            <person name="Hart E."/>
            <person name="Norman C.H."/>
            <person name="Humphray S."/>
            <person name="Jaffe D.B."/>
            <person name="Jones M."/>
            <person name="Kamal M."/>
            <person name="Khodiyar V.K."/>
            <person name="LaButti K."/>
            <person name="Laird G."/>
            <person name="Lehoczky J."/>
            <person name="Liu X."/>
            <person name="Lokyitsang T."/>
            <person name="Loveland J."/>
            <person name="Lui A."/>
            <person name="Macdonald P."/>
            <person name="Major J.E."/>
            <person name="Matthews L."/>
            <person name="Mauceli E."/>
            <person name="McCarroll S.A."/>
            <person name="Mihalev A.H."/>
            <person name="Mudge J."/>
            <person name="Nguyen C."/>
            <person name="Nicol R."/>
            <person name="O'Leary S.B."/>
            <person name="Osoegawa K."/>
            <person name="Schwartz D.C."/>
            <person name="Shaw-Smith C."/>
            <person name="Stankiewicz P."/>
            <person name="Steward C."/>
            <person name="Swarbreck D."/>
            <person name="Venkataraman V."/>
            <person name="Whittaker C.A."/>
            <person name="Yang X."/>
            <person name="Zimmer A.R."/>
            <person name="Bradley A."/>
            <person name="Hubbard T."/>
            <person name="Birren B.W."/>
            <person name="Rogers J."/>
            <person name="Lander E.S."/>
            <person name="Nusbaum C."/>
        </authorList>
    </citation>
    <scope>NUCLEOTIDE SEQUENCE [LARGE SCALE GENOMIC DNA]</scope>
</reference>
<reference key="6">
    <citation type="submission" date="2005-07" db="EMBL/GenBank/DDBJ databases">
        <authorList>
            <person name="Mural R.J."/>
            <person name="Istrail S."/>
            <person name="Sutton G.G."/>
            <person name="Florea L."/>
            <person name="Halpern A.L."/>
            <person name="Mobarry C.M."/>
            <person name="Lippert R."/>
            <person name="Walenz B."/>
            <person name="Shatkay H."/>
            <person name="Dew I."/>
            <person name="Miller J.R."/>
            <person name="Flanigan M.J."/>
            <person name="Edwards N.J."/>
            <person name="Bolanos R."/>
            <person name="Fasulo D."/>
            <person name="Halldorsson B.V."/>
            <person name="Hannenhalli S."/>
            <person name="Turner R."/>
            <person name="Yooseph S."/>
            <person name="Lu F."/>
            <person name="Nusskern D.R."/>
            <person name="Shue B.C."/>
            <person name="Zheng X.H."/>
            <person name="Zhong F."/>
            <person name="Delcher A.L."/>
            <person name="Huson D.H."/>
            <person name="Kravitz S.A."/>
            <person name="Mouchard L."/>
            <person name="Reinert K."/>
            <person name="Remington K.A."/>
            <person name="Clark A.G."/>
            <person name="Waterman M.S."/>
            <person name="Eichler E.E."/>
            <person name="Adams M.D."/>
            <person name="Hunkapiller M.W."/>
            <person name="Myers E.W."/>
            <person name="Venter J.C."/>
        </authorList>
    </citation>
    <scope>NUCLEOTIDE SEQUENCE [LARGE SCALE GENOMIC DNA]</scope>
</reference>
<reference key="7">
    <citation type="journal article" date="2004" name="Genome Res.">
        <title>The status, quality, and expansion of the NIH full-length cDNA project: the Mammalian Gene Collection (MGC).</title>
        <authorList>
            <consortium name="The MGC Project Team"/>
        </authorList>
    </citation>
    <scope>NUCLEOTIDE SEQUENCE [LARGE SCALE MRNA] (ISOFORM 1)</scope>
    <source>
        <tissue>Colon</tissue>
    </source>
</reference>
<reference key="8">
    <citation type="journal article" date="2003" name="Mol. Cell">
        <title>Removal of a single pore subcomplex results in vertebrate nuclei devoid of nuclear pores.</title>
        <authorList>
            <person name="Harel A."/>
            <person name="Orjalo A.V."/>
            <person name="Vincent T."/>
            <person name="Lachish-Zalait A."/>
            <person name="Vasu S."/>
            <person name="Shah S."/>
            <person name="Zimmerman E."/>
            <person name="Elbaum M."/>
            <person name="Forbes D.J."/>
        </authorList>
    </citation>
    <scope>FUNCTION IN NPC ASSEMBLY</scope>
    <scope>SUBCELLULAR LOCATION</scope>
    <scope>INTERACTION WITH NUP160; NUP133 AND SEC13</scope>
</reference>
<reference key="9">
    <citation type="journal article" date="2004" name="Mol. Biol. Cell">
        <title>The entire Nup107-160 complex, including three new members, is targeted as one entity to kinetochores in mitosis.</title>
        <authorList>
            <person name="Loieodice I."/>
            <person name="Alves A."/>
            <person name="Rabut G."/>
            <person name="Van Overbeek M."/>
            <person name="Ellenberg J."/>
            <person name="Sibarita J.-B."/>
            <person name="Doye V."/>
        </authorList>
    </citation>
    <scope>SUBCELLULAR LOCATION</scope>
    <scope>IDENTIFICATION IN THE NUP107-160 COMPLEX</scope>
    <scope>INTERACTION WITH NUP37; NUP107; NUP43 AND SEC13</scope>
</reference>
<reference key="10">
    <citation type="journal article" date="2006" name="Mol. Biol. Cell">
        <title>The Nup107-160 nucleoporin complex is required for correct bipolar spindle assembly.</title>
        <authorList>
            <person name="Orjalo A.V."/>
            <person name="Arnaoutov A."/>
            <person name="Shen Z."/>
            <person name="Boyarchuk Y."/>
            <person name="Zeitlin S.G."/>
            <person name="Fontoura B."/>
            <person name="Briggs S."/>
            <person name="Dasso M."/>
            <person name="Forbes D.J."/>
        </authorList>
    </citation>
    <scope>FUNCTION IN SPINDLE ASSEMBLY</scope>
    <scope>SUBCELLULAR LOCATION</scope>
</reference>
<reference key="11">
    <citation type="journal article" date="2008" name="Mol. Cell">
        <title>Kinase-selective enrichment enables quantitative phosphoproteomics of the kinome across the cell cycle.</title>
        <authorList>
            <person name="Daub H."/>
            <person name="Olsen J.V."/>
            <person name="Bairlein M."/>
            <person name="Gnad F."/>
            <person name="Oppermann F.S."/>
            <person name="Korner R."/>
            <person name="Greff Z."/>
            <person name="Keri G."/>
            <person name="Stemmann O."/>
            <person name="Mann M."/>
        </authorList>
    </citation>
    <scope>PHOSPHORYLATION [LARGE SCALE ANALYSIS] AT SER-223</scope>
    <scope>IDENTIFICATION BY MASS SPECTROMETRY [LARGE SCALE ANALYSIS]</scope>
    <source>
        <tissue>Cervix carcinoma</tissue>
    </source>
</reference>
<reference key="12">
    <citation type="journal article" date="2009" name="Anal. Chem.">
        <title>Lys-N and trypsin cover complementary parts of the phosphoproteome in a refined SCX-based approach.</title>
        <authorList>
            <person name="Gauci S."/>
            <person name="Helbig A.O."/>
            <person name="Slijper M."/>
            <person name="Krijgsveld J."/>
            <person name="Heck A.J."/>
            <person name="Mohammed S."/>
        </authorList>
    </citation>
    <scope>ACETYLATION [LARGE SCALE ANALYSIS] AT MET-1</scope>
    <scope>IDENTIFICATION BY MASS SPECTROMETRY [LARGE SCALE ANALYSIS]</scope>
</reference>
<reference key="13">
    <citation type="journal article" date="2011" name="BMC Syst. Biol.">
        <title>Initial characterization of the human central proteome.</title>
        <authorList>
            <person name="Burkard T.R."/>
            <person name="Planyavsky M."/>
            <person name="Kaupe I."/>
            <person name="Breitwieser F.P."/>
            <person name="Buerckstuemmer T."/>
            <person name="Bennett K.L."/>
            <person name="Superti-Furga G."/>
            <person name="Colinge J."/>
        </authorList>
    </citation>
    <scope>IDENTIFICATION BY MASS SPECTROMETRY [LARGE SCALE ANALYSIS]</scope>
</reference>
<reference key="14">
    <citation type="journal article" date="2014" name="J. Proteomics">
        <title>An enzyme assisted RP-RPLC approach for in-depth analysis of human liver phosphoproteome.</title>
        <authorList>
            <person name="Bian Y."/>
            <person name="Song C."/>
            <person name="Cheng K."/>
            <person name="Dong M."/>
            <person name="Wang F."/>
            <person name="Huang J."/>
            <person name="Sun D."/>
            <person name="Wang L."/>
            <person name="Ye M."/>
            <person name="Zou H."/>
        </authorList>
    </citation>
    <scope>IDENTIFICATION BY MASS SPECTROMETRY [LARGE SCALE ANALYSIS]</scope>
    <source>
        <tissue>Liver</tissue>
    </source>
</reference>
<reference key="15">
    <citation type="journal article" date="2018" name="J. Clin. Invest.">
        <title>Mutations in multiple components of the nuclear pore complex cause nephrotic syndrome.</title>
        <authorList>
            <person name="Braun D.A."/>
            <person name="Lovric S."/>
            <person name="Schapiro D."/>
            <person name="Schneider R."/>
            <person name="Marquez J."/>
            <person name="Asif M."/>
            <person name="Hussain M.S."/>
            <person name="Daga A."/>
            <person name="Widmeier E."/>
            <person name="Rao J."/>
            <person name="Ashraf S."/>
            <person name="Tan W."/>
            <person name="Lusk C.P."/>
            <person name="Kolb A."/>
            <person name="Jobst-Schwan T."/>
            <person name="Schmidt J.M."/>
            <person name="Hoogstraten C.A."/>
            <person name="Eddy K."/>
            <person name="Kitzler T.M."/>
            <person name="Shril S."/>
            <person name="Moawia A."/>
            <person name="Schrage K."/>
            <person name="Khayyat A.I.A."/>
            <person name="Lawson J.A."/>
            <person name="Gee H.Y."/>
            <person name="Warejko J.K."/>
            <person name="Hermle T."/>
            <person name="Majmundar A.J."/>
            <person name="Hugo H."/>
            <person name="Budde B."/>
            <person name="Motameny S."/>
            <person name="Altmueller J."/>
            <person name="Noegel A.A."/>
            <person name="Fathy H.M."/>
            <person name="Gale D.P."/>
            <person name="Waseem S.S."/>
            <person name="Khan A."/>
            <person name="Kerecuk L."/>
            <person name="Hashmi S."/>
            <person name="Mohebbi N."/>
            <person name="Ettenger R."/>
            <person name="Serdaroglu E."/>
            <person name="Alhasan K.A."/>
            <person name="Hashem M."/>
            <person name="Goncalves S."/>
            <person name="Ariceta G."/>
            <person name="Ubetagoyena M."/>
            <person name="Antonin W."/>
            <person name="Baig S.M."/>
            <person name="Alkuraya F.S."/>
            <person name="Shen Q."/>
            <person name="Xu H."/>
            <person name="Antignac C."/>
            <person name="Lifton R.P."/>
            <person name="Mane S."/>
            <person name="Nuernberg P."/>
            <person name="Khokha M.K."/>
            <person name="Hildebrandt F."/>
        </authorList>
    </citation>
    <scope>FUNCTION</scope>
    <scope>INTERACTION WITH NUP160</scope>
    <scope>INVOLVEMENT IN NPHS17</scope>
    <scope>VARIANTS NPHS17 VAL-477; PRO-581 AND TRP-645</scope>
    <scope>CHARACTERIZATION OF VARIANTS NPHS17 VAL-477; PRO-581 AND TRP-645</scope>
</reference>
<protein>
    <recommendedName>
        <fullName>Nuclear pore complex protein Nup85</fullName>
    </recommendedName>
    <alternativeName>
        <fullName>85 kDa nucleoporin</fullName>
    </alternativeName>
    <alternativeName>
        <fullName>FROUNT</fullName>
    </alternativeName>
    <alternativeName>
        <fullName>Nucleoporin Nup75</fullName>
    </alternativeName>
    <alternativeName>
        <fullName>Nucleoporin Nup85</fullName>
    </alternativeName>
    <alternativeName>
        <fullName>Pericentrin-1</fullName>
    </alternativeName>
</protein>
<sequence length="656" mass="75019">MEELDGEPTVTLIPGVNSKKNQMYFDWGPGEMLVCETSFNKKEKSEMVPSCPFIYIIRKDVDVYSQILRKLFNESHGIFLGLQRIDEELTGKSRKSQLVRVSKNYRSVIRACMEEMHQVAIAAKDPANGRQFSSQVSILSAMELIWNLCEILFIEVAPAGPLLLHLLDWVRLHVCEVDSLSADVLGSENPSKHDSFWNLVTILVLQGRLDEARQMLSKEADASPASAGICRIMGDLMRTMPILSPGNTQTLTELELKWQHWHEECERYLQDSTFATSPHLESLLKIMLGDEAALLEQKELLSNWYHFLVTRLLYSNPTVKPIDLHYYAQSSLDLFLGGESSPEPLDNILLAAFEFDIHQVIKECSIALSNWWFVAHLTDLLDHCKLLQSHNLYFGSNMREFLLLEYASGLFAHPSLWQLGVDYFDYCPELGRVSLELHIERIPLNTEQKALKVLRICEQRQMTEQVRSICKILAMKAVRNNRLGSALSWSIRAKDAAFATLVSDRFLRDYCERGCFSDLDLIDNLGPAMMLSDRLTFLGKYREFHRMYGEKRFADAASLLLSLMTSRIAPRSFWMTLLTDALPLLEQKQVIFSAEQTYELMRCLEDLTSRRPVHGESDTEQLQDDDIETTKVEMLRLSLARNLARAIIREGSLEGS</sequence>
<feature type="chain" id="PRO_0000324187" description="Nuclear pore complex protein Nup85">
    <location>
        <begin position="1"/>
        <end position="656"/>
    </location>
</feature>
<feature type="modified residue" description="N-acetylmethionine" evidence="11">
    <location>
        <position position="1"/>
    </location>
</feature>
<feature type="modified residue" description="N6-acetyllysine" evidence="1">
    <location>
        <position position="92"/>
    </location>
</feature>
<feature type="modified residue" description="Phosphoserine" evidence="10">
    <location>
        <position position="223"/>
    </location>
</feature>
<feature type="splice variant" id="VSP_056079" description="In isoform 3." evidence="9">
    <location>
        <begin position="1"/>
        <end position="46"/>
    </location>
</feature>
<feature type="splice variant" id="VSP_056080" description="In isoform 2." evidence="8">
    <original>MEELDGEPTVTLIPGVNSKKNQMYFDWGPGE</original>
    <variation>MAASSAARSPFCQQWSSSGTCVRFFLLKWPQ</variation>
    <location>
        <begin position="1"/>
        <end position="31"/>
    </location>
</feature>
<feature type="splice variant" id="VSP_056081" description="In isoform 2." evidence="8">
    <location>
        <begin position="32"/>
        <end position="199"/>
    </location>
</feature>
<feature type="splice variant" id="VSP_056082" description="In isoform 2." evidence="8">
    <original>IFSAEQTYELMRCLEDLTSRRPVHGESDTEQLQDDDIETTKVEMLRLSLARNLARAIIREGSLEGS</original>
    <variation>KVAAAVVFFACQSLLELSCIAVADVRVSSFVVLPVRVYSP</variation>
    <location>
        <begin position="591"/>
        <end position="656"/>
    </location>
</feature>
<feature type="sequence variant" id="VAR_081364" description="In NPHS17; uncertain significance; dbSNP:rs1568094661." evidence="7">
    <original>A</original>
    <variation>V</variation>
    <location>
        <position position="477"/>
    </location>
</feature>
<feature type="sequence variant" id="VAR_081365" description="In NPHS17; decreased function in nephrogenesis; unable to fully rescue morpholino-induced nephrogenesis defects in Xenopus; decreased interaction with NUP160; dbSNP:rs1321552081." evidence="7">
    <original>A</original>
    <variation>P</variation>
    <location>
        <position position="581"/>
    </location>
</feature>
<feature type="sequence variant" id="VAR_081366" description="In NPHS17; loss of function in nephrogenesis; unable to rescue morpholino-induced nephrogenesis defects in Xenopus; decreased interaction with NUP160; dbSNP:rs368572297." evidence="7">
    <original>R</original>
    <variation>W</variation>
    <location>
        <position position="645"/>
    </location>
</feature>
<feature type="sequence conflict" description="In Ref. 3; BAB14130." evidence="9" ref="3">
    <original>L</original>
    <variation>P</variation>
    <location>
        <position position="501"/>
    </location>
</feature>
<name>NUP85_HUMAN</name>
<dbReference type="EMBL" id="AF514995">
    <property type="protein sequence ID" value="AAM76706.1"/>
    <property type="molecule type" value="mRNA"/>
</dbReference>
<dbReference type="EMBL" id="AF498261">
    <property type="protein sequence ID" value="AAM18528.1"/>
    <property type="molecule type" value="mRNA"/>
</dbReference>
<dbReference type="EMBL" id="AK022611">
    <property type="protein sequence ID" value="BAB14130.1"/>
    <property type="molecule type" value="mRNA"/>
</dbReference>
<dbReference type="EMBL" id="AK297574">
    <property type="protein sequence ID" value="BAG59965.1"/>
    <property type="molecule type" value="mRNA"/>
</dbReference>
<dbReference type="EMBL" id="AK298519">
    <property type="protein sequence ID" value="BAG60723.1"/>
    <property type="molecule type" value="mRNA"/>
</dbReference>
<dbReference type="EMBL" id="AL833893">
    <property type="protein sequence ID" value="CAD38749.1"/>
    <property type="status" value="ALT_INIT"/>
    <property type="molecule type" value="mRNA"/>
</dbReference>
<dbReference type="EMBL" id="AC022211">
    <property type="status" value="NOT_ANNOTATED_CDS"/>
    <property type="molecule type" value="Genomic_DNA"/>
</dbReference>
<dbReference type="EMBL" id="CH471099">
    <property type="protein sequence ID" value="EAW89251.1"/>
    <property type="molecule type" value="Genomic_DNA"/>
</dbReference>
<dbReference type="EMBL" id="BC000697">
    <property type="protein sequence ID" value="AAH00697.1"/>
    <property type="molecule type" value="mRNA"/>
</dbReference>
<dbReference type="CCDS" id="CCDS32730.1">
    <molecule id="Q9BW27-1"/>
</dbReference>
<dbReference type="RefSeq" id="NP_001290205.1">
    <molecule id="Q9BW27-3"/>
    <property type="nucleotide sequence ID" value="NM_001303276.2"/>
</dbReference>
<dbReference type="RefSeq" id="NP_079120.1">
    <molecule id="Q9BW27-1"/>
    <property type="nucleotide sequence ID" value="NM_024844.5"/>
</dbReference>
<dbReference type="PDB" id="5A9Q">
    <property type="method" value="EM"/>
    <property type="resolution" value="23.00 A"/>
    <property type="chains" value="8/H/Q/Z=1-656"/>
</dbReference>
<dbReference type="PDB" id="7PEQ">
    <property type="method" value="EM"/>
    <property type="resolution" value="35.00 A"/>
    <property type="chains" value="AH/BH/CH/DH=1-656"/>
</dbReference>
<dbReference type="PDB" id="7R5J">
    <property type="method" value="EM"/>
    <property type="resolution" value="50.00 A"/>
    <property type="chains" value="P0/P1/P2/P3=1-656"/>
</dbReference>
<dbReference type="PDB" id="7R5K">
    <property type="method" value="EM"/>
    <property type="resolution" value="12.00 A"/>
    <property type="chains" value="P0/P1/P2/P3=1-656"/>
</dbReference>
<dbReference type="PDBsum" id="5A9Q"/>
<dbReference type="PDBsum" id="7PEQ"/>
<dbReference type="PDBsum" id="7R5J"/>
<dbReference type="PDBsum" id="7R5K"/>
<dbReference type="EMDB" id="EMD-14321"/>
<dbReference type="EMDB" id="EMD-14322"/>
<dbReference type="SMR" id="Q9BW27"/>
<dbReference type="BioGRID" id="122985">
    <property type="interactions" value="155"/>
</dbReference>
<dbReference type="ComplexPortal" id="CPX-873">
    <property type="entry name" value="Nuclear pore complex"/>
</dbReference>
<dbReference type="CORUM" id="Q9BW27"/>
<dbReference type="FunCoup" id="Q9BW27">
    <property type="interactions" value="4213"/>
</dbReference>
<dbReference type="IntAct" id="Q9BW27">
    <property type="interactions" value="76"/>
</dbReference>
<dbReference type="MINT" id="Q9BW27"/>
<dbReference type="STRING" id="9606.ENSP00000245544"/>
<dbReference type="TCDB" id="1.I.1.1.3">
    <property type="family name" value="the nuclear pore complex (npc) family"/>
</dbReference>
<dbReference type="GlyGen" id="Q9BW27">
    <property type="glycosylation" value="1 site, 1 O-linked glycan (1 site)"/>
</dbReference>
<dbReference type="iPTMnet" id="Q9BW27"/>
<dbReference type="MetOSite" id="Q9BW27"/>
<dbReference type="PhosphoSitePlus" id="Q9BW27"/>
<dbReference type="SwissPalm" id="Q9BW27"/>
<dbReference type="BioMuta" id="NUP85"/>
<dbReference type="DMDM" id="74733394"/>
<dbReference type="jPOST" id="Q9BW27"/>
<dbReference type="MassIVE" id="Q9BW27"/>
<dbReference type="PaxDb" id="9606-ENSP00000245544"/>
<dbReference type="PeptideAtlas" id="Q9BW27"/>
<dbReference type="ProteomicsDB" id="4631"/>
<dbReference type="ProteomicsDB" id="4821"/>
<dbReference type="ProteomicsDB" id="79251">
    <molecule id="Q9BW27-1"/>
</dbReference>
<dbReference type="Pumba" id="Q9BW27"/>
<dbReference type="Antibodypedia" id="32118">
    <property type="antibodies" value="228 antibodies from 30 providers"/>
</dbReference>
<dbReference type="DNASU" id="79902"/>
<dbReference type="Ensembl" id="ENST00000245544.9">
    <molecule id="Q9BW27-1"/>
    <property type="protein sequence ID" value="ENSP00000245544.4"/>
    <property type="gene ID" value="ENSG00000125450.11"/>
</dbReference>
<dbReference type="GeneID" id="79902"/>
<dbReference type="KEGG" id="hsa:79902"/>
<dbReference type="MANE-Select" id="ENST00000245544.9">
    <property type="protein sequence ID" value="ENSP00000245544.4"/>
    <property type="RefSeq nucleotide sequence ID" value="NM_024844.5"/>
    <property type="RefSeq protein sequence ID" value="NP_079120.1"/>
</dbReference>
<dbReference type="UCSC" id="uc002jng.2">
    <molecule id="Q9BW27-1"/>
    <property type="organism name" value="human"/>
</dbReference>
<dbReference type="AGR" id="HGNC:8734"/>
<dbReference type="CTD" id="79902"/>
<dbReference type="DisGeNET" id="79902"/>
<dbReference type="GeneCards" id="NUP85"/>
<dbReference type="HGNC" id="HGNC:8734">
    <property type="gene designation" value="NUP85"/>
</dbReference>
<dbReference type="HPA" id="ENSG00000125450">
    <property type="expression patterns" value="Low tissue specificity"/>
</dbReference>
<dbReference type="MalaCards" id="NUP85"/>
<dbReference type="MIM" id="170285">
    <property type="type" value="gene"/>
</dbReference>
<dbReference type="MIM" id="618176">
    <property type="type" value="phenotype"/>
</dbReference>
<dbReference type="neXtProt" id="NX_Q9BW27"/>
<dbReference type="OpenTargets" id="ENSG00000125450"/>
<dbReference type="Orphanet" id="656">
    <property type="disease" value="Hereditary steroid-resistant nephrotic syndrome"/>
</dbReference>
<dbReference type="Orphanet" id="808">
    <property type="disease" value="Seckel syndrome"/>
</dbReference>
<dbReference type="PharmGKB" id="PA142671241"/>
<dbReference type="VEuPathDB" id="HostDB:ENSG00000125450"/>
<dbReference type="eggNOG" id="KOG2271">
    <property type="taxonomic scope" value="Eukaryota"/>
</dbReference>
<dbReference type="GeneTree" id="ENSGT00390000000204"/>
<dbReference type="InParanoid" id="Q9BW27"/>
<dbReference type="OMA" id="ELMEWLN"/>
<dbReference type="OrthoDB" id="17644at2759"/>
<dbReference type="PAN-GO" id="Q9BW27">
    <property type="GO annotations" value="5 GO annotations based on evolutionary models"/>
</dbReference>
<dbReference type="PhylomeDB" id="Q9BW27"/>
<dbReference type="TreeFam" id="TF323240"/>
<dbReference type="PathwayCommons" id="Q9BW27"/>
<dbReference type="Reactome" id="R-HSA-1169408">
    <property type="pathway name" value="ISG15 antiviral mechanism"/>
</dbReference>
<dbReference type="Reactome" id="R-HSA-141444">
    <property type="pathway name" value="Amplification of signal from unattached kinetochores via a MAD2 inhibitory signal"/>
</dbReference>
<dbReference type="Reactome" id="R-HSA-159227">
    <property type="pathway name" value="Transport of the SLBP independent Mature mRNA"/>
</dbReference>
<dbReference type="Reactome" id="R-HSA-159230">
    <property type="pathway name" value="Transport of the SLBP Dependant Mature mRNA"/>
</dbReference>
<dbReference type="Reactome" id="R-HSA-159231">
    <property type="pathway name" value="Transport of Mature mRNA Derived from an Intronless Transcript"/>
</dbReference>
<dbReference type="Reactome" id="R-HSA-159236">
    <property type="pathway name" value="Transport of Mature mRNA derived from an Intron-Containing Transcript"/>
</dbReference>
<dbReference type="Reactome" id="R-HSA-165054">
    <property type="pathway name" value="Rev-mediated nuclear export of HIV RNA"/>
</dbReference>
<dbReference type="Reactome" id="R-HSA-168271">
    <property type="pathway name" value="Transport of Ribonucleoproteins into the Host Nucleus"/>
</dbReference>
<dbReference type="Reactome" id="R-HSA-168276">
    <property type="pathway name" value="NS1 Mediated Effects on Host Pathways"/>
</dbReference>
<dbReference type="Reactome" id="R-HSA-168325">
    <property type="pathway name" value="Viral Messenger RNA Synthesis"/>
</dbReference>
<dbReference type="Reactome" id="R-HSA-168333">
    <property type="pathway name" value="NEP/NS2 Interacts with the Cellular Export Machinery"/>
</dbReference>
<dbReference type="Reactome" id="R-HSA-170822">
    <property type="pathway name" value="Regulation of Glucokinase by Glucokinase Regulatory Protein"/>
</dbReference>
<dbReference type="Reactome" id="R-HSA-180746">
    <property type="pathway name" value="Nuclear import of Rev protein"/>
</dbReference>
<dbReference type="Reactome" id="R-HSA-180910">
    <property type="pathway name" value="Vpr-mediated nuclear import of PICs"/>
</dbReference>
<dbReference type="Reactome" id="R-HSA-191859">
    <property type="pathway name" value="snRNP Assembly"/>
</dbReference>
<dbReference type="Reactome" id="R-HSA-2467813">
    <property type="pathway name" value="Separation of Sister Chromatids"/>
</dbReference>
<dbReference type="Reactome" id="R-HSA-2500257">
    <property type="pathway name" value="Resolution of Sister Chromatid Cohesion"/>
</dbReference>
<dbReference type="Reactome" id="R-HSA-3108214">
    <property type="pathway name" value="SUMOylation of DNA damage response and repair proteins"/>
</dbReference>
<dbReference type="Reactome" id="R-HSA-3232142">
    <property type="pathway name" value="SUMOylation of ubiquitinylation proteins"/>
</dbReference>
<dbReference type="Reactome" id="R-HSA-3301854">
    <property type="pathway name" value="Nuclear Pore Complex (NPC) Disassembly"/>
</dbReference>
<dbReference type="Reactome" id="R-HSA-3371453">
    <property type="pathway name" value="Regulation of HSF1-mediated heat shock response"/>
</dbReference>
<dbReference type="Reactome" id="R-HSA-4085377">
    <property type="pathway name" value="SUMOylation of SUMOylation proteins"/>
</dbReference>
<dbReference type="Reactome" id="R-HSA-4551638">
    <property type="pathway name" value="SUMOylation of chromatin organization proteins"/>
</dbReference>
<dbReference type="Reactome" id="R-HSA-4570464">
    <property type="pathway name" value="SUMOylation of RNA binding proteins"/>
</dbReference>
<dbReference type="Reactome" id="R-HSA-4615885">
    <property type="pathway name" value="SUMOylation of DNA replication proteins"/>
</dbReference>
<dbReference type="Reactome" id="R-HSA-5578749">
    <property type="pathway name" value="Transcriptional regulation by small RNAs"/>
</dbReference>
<dbReference type="Reactome" id="R-HSA-5619107">
    <property type="pathway name" value="Defective TPR may confer susceptibility towards thyroid papillary carcinoma (TPC)"/>
</dbReference>
<dbReference type="Reactome" id="R-HSA-5663220">
    <property type="pathway name" value="RHO GTPases Activate Formins"/>
</dbReference>
<dbReference type="Reactome" id="R-HSA-6784531">
    <property type="pathway name" value="tRNA processing in the nucleus"/>
</dbReference>
<dbReference type="Reactome" id="R-HSA-68877">
    <property type="pathway name" value="Mitotic Prometaphase"/>
</dbReference>
<dbReference type="Reactome" id="R-HSA-9609690">
    <property type="pathway name" value="HCMV Early Events"/>
</dbReference>
<dbReference type="Reactome" id="R-HSA-9610379">
    <property type="pathway name" value="HCMV Late Events"/>
</dbReference>
<dbReference type="Reactome" id="R-HSA-9615933">
    <property type="pathway name" value="Postmitotic nuclear pore complex (NPC) reformation"/>
</dbReference>
<dbReference type="Reactome" id="R-HSA-9648025">
    <property type="pathway name" value="EML4 and NUDC in mitotic spindle formation"/>
</dbReference>
<dbReference type="Reactome" id="R-HSA-9705671">
    <property type="pathway name" value="SARS-CoV-2 activates/modulates innate and adaptive immune responses"/>
</dbReference>
<dbReference type="SignaLink" id="Q9BW27"/>
<dbReference type="SIGNOR" id="Q9BW27"/>
<dbReference type="BioGRID-ORCS" id="79902">
    <property type="hits" value="771 hits in 1133 CRISPR screens"/>
</dbReference>
<dbReference type="CD-CODE" id="8C2F96ED">
    <property type="entry name" value="Centrosome"/>
</dbReference>
<dbReference type="CD-CODE" id="D6A53B8E">
    <property type="entry name" value="Nuclear pore complex"/>
</dbReference>
<dbReference type="ChiTaRS" id="NUP85">
    <property type="organism name" value="human"/>
</dbReference>
<dbReference type="GeneWiki" id="NUP85"/>
<dbReference type="GenomeRNAi" id="79902"/>
<dbReference type="Pharos" id="Q9BW27">
    <property type="development level" value="Tbio"/>
</dbReference>
<dbReference type="PRO" id="PR:Q9BW27"/>
<dbReference type="Proteomes" id="UP000005640">
    <property type="component" value="Chromosome 17"/>
</dbReference>
<dbReference type="RNAct" id="Q9BW27">
    <property type="molecule type" value="protein"/>
</dbReference>
<dbReference type="Bgee" id="ENSG00000125450">
    <property type="expression patterns" value="Expressed in cerebellar hemisphere and 171 other cell types or tissues"/>
</dbReference>
<dbReference type="ExpressionAtlas" id="Q9BW27">
    <property type="expression patterns" value="baseline and differential"/>
</dbReference>
<dbReference type="GO" id="GO:0015629">
    <property type="term" value="C:actin cytoskeleton"/>
    <property type="evidence" value="ECO:0000314"/>
    <property type="project" value="HPA"/>
</dbReference>
<dbReference type="GO" id="GO:0036064">
    <property type="term" value="C:ciliary basal body"/>
    <property type="evidence" value="ECO:0000314"/>
    <property type="project" value="HPA"/>
</dbReference>
<dbReference type="GO" id="GO:0005829">
    <property type="term" value="C:cytosol"/>
    <property type="evidence" value="ECO:0000314"/>
    <property type="project" value="HPA"/>
</dbReference>
<dbReference type="GO" id="GO:0043231">
    <property type="term" value="C:intracellular membrane-bounded organelle"/>
    <property type="evidence" value="ECO:0000314"/>
    <property type="project" value="HPA"/>
</dbReference>
<dbReference type="GO" id="GO:0000776">
    <property type="term" value="C:kinetochore"/>
    <property type="evidence" value="ECO:0007669"/>
    <property type="project" value="UniProtKB-KW"/>
</dbReference>
<dbReference type="GO" id="GO:0016020">
    <property type="term" value="C:membrane"/>
    <property type="evidence" value="ECO:0007005"/>
    <property type="project" value="UniProtKB"/>
</dbReference>
<dbReference type="GO" id="GO:0005635">
    <property type="term" value="C:nuclear envelope"/>
    <property type="evidence" value="ECO:0000314"/>
    <property type="project" value="ComplexPortal"/>
</dbReference>
<dbReference type="GO" id="GO:0031965">
    <property type="term" value="C:nuclear membrane"/>
    <property type="evidence" value="ECO:0007669"/>
    <property type="project" value="UniProtKB-SubCell"/>
</dbReference>
<dbReference type="GO" id="GO:0005643">
    <property type="term" value="C:nuclear pore"/>
    <property type="evidence" value="ECO:0000303"/>
    <property type="project" value="ComplexPortal"/>
</dbReference>
<dbReference type="GO" id="GO:0031080">
    <property type="term" value="C:nuclear pore outer ring"/>
    <property type="evidence" value="ECO:0000314"/>
    <property type="project" value="UniProtKB"/>
</dbReference>
<dbReference type="GO" id="GO:0005654">
    <property type="term" value="C:nucleoplasm"/>
    <property type="evidence" value="ECO:0000314"/>
    <property type="project" value="HPA"/>
</dbReference>
<dbReference type="GO" id="GO:0005819">
    <property type="term" value="C:spindle"/>
    <property type="evidence" value="ECO:0007669"/>
    <property type="project" value="UniProtKB-SubCell"/>
</dbReference>
<dbReference type="GO" id="GO:0017056">
    <property type="term" value="F:structural constituent of nuclear pore"/>
    <property type="evidence" value="ECO:0000318"/>
    <property type="project" value="GO_Central"/>
</dbReference>
<dbReference type="GO" id="GO:0030032">
    <property type="term" value="P:lamellipodium assembly"/>
    <property type="evidence" value="ECO:0007669"/>
    <property type="project" value="Ensembl"/>
</dbReference>
<dbReference type="GO" id="GO:0048246">
    <property type="term" value="P:macrophage chemotaxis"/>
    <property type="evidence" value="ECO:0007669"/>
    <property type="project" value="Ensembl"/>
</dbReference>
<dbReference type="GO" id="GO:0006406">
    <property type="term" value="P:mRNA export from nucleus"/>
    <property type="evidence" value="ECO:0000318"/>
    <property type="project" value="GO_Central"/>
</dbReference>
<dbReference type="GO" id="GO:0072006">
    <property type="term" value="P:nephron development"/>
    <property type="evidence" value="ECO:0000315"/>
    <property type="project" value="UniProtKB"/>
</dbReference>
<dbReference type="GO" id="GO:0006913">
    <property type="term" value="P:nucleocytoplasmic transport"/>
    <property type="evidence" value="ECO:0000303"/>
    <property type="project" value="ComplexPortal"/>
</dbReference>
<dbReference type="GO" id="GO:0045893">
    <property type="term" value="P:positive regulation of DNA-templated transcription"/>
    <property type="evidence" value="ECO:0000318"/>
    <property type="project" value="GO_Central"/>
</dbReference>
<dbReference type="GO" id="GO:0006606">
    <property type="term" value="P:protein import into nucleus"/>
    <property type="evidence" value="ECO:0000318"/>
    <property type="project" value="GO_Central"/>
</dbReference>
<dbReference type="InterPro" id="IPR011502">
    <property type="entry name" value="Nucleoporin_Nup85"/>
</dbReference>
<dbReference type="PANTHER" id="PTHR13373">
    <property type="entry name" value="FROUNT PROTEIN-RELATED"/>
    <property type="match status" value="1"/>
</dbReference>
<dbReference type="PANTHER" id="PTHR13373:SF21">
    <property type="entry name" value="NUCLEAR PORE COMPLEX PROTEIN NUP85"/>
    <property type="match status" value="1"/>
</dbReference>
<dbReference type="Pfam" id="PF07575">
    <property type="entry name" value="Nucleopor_Nup85"/>
    <property type="match status" value="1"/>
</dbReference>
<keyword id="KW-0002">3D-structure</keyword>
<keyword id="KW-0007">Acetylation</keyword>
<keyword id="KW-0025">Alternative splicing</keyword>
<keyword id="KW-0137">Centromere</keyword>
<keyword id="KW-0158">Chromosome</keyword>
<keyword id="KW-0963">Cytoplasm</keyword>
<keyword id="KW-0206">Cytoskeleton</keyword>
<keyword id="KW-0225">Disease variant</keyword>
<keyword id="KW-0995">Kinetochore</keyword>
<keyword id="KW-0472">Membrane</keyword>
<keyword id="KW-0509">mRNA transport</keyword>
<keyword id="KW-0906">Nuclear pore complex</keyword>
<keyword id="KW-0539">Nucleus</keyword>
<keyword id="KW-0597">Phosphoprotein</keyword>
<keyword id="KW-0653">Protein transport</keyword>
<keyword id="KW-1267">Proteomics identification</keyword>
<keyword id="KW-1185">Reference proteome</keyword>
<keyword id="KW-0811">Translocation</keyword>
<keyword id="KW-0813">Transport</keyword>
<accession>Q9BW27</accession>
<accession>B4DMQ3</accession>
<accession>B4DPW1</accession>
<accession>Q8NDI4</accession>
<accession>Q9H9U1</accession>
<evidence type="ECO:0000250" key="1">
    <source>
        <dbReference type="UniProtKB" id="Q8R480"/>
    </source>
</evidence>
<evidence type="ECO:0000269" key="2">
    <source>
    </source>
</evidence>
<evidence type="ECO:0000269" key="3">
    <source>
    </source>
</evidence>
<evidence type="ECO:0000269" key="4">
    <source>
    </source>
</evidence>
<evidence type="ECO:0000269" key="5">
    <source>
    </source>
</evidence>
<evidence type="ECO:0000269" key="6">
    <source>
    </source>
</evidence>
<evidence type="ECO:0000269" key="7">
    <source>
    </source>
</evidence>
<evidence type="ECO:0000303" key="8">
    <source>
    </source>
</evidence>
<evidence type="ECO:0000305" key="9"/>
<evidence type="ECO:0007744" key="10">
    <source>
    </source>
</evidence>
<evidence type="ECO:0007744" key="11">
    <source>
    </source>
</evidence>
<comment type="function">
    <text evidence="3 5 6 7">Essential component of the nuclear pore complex (NPC) that seems to be required for NPC assembly and maintenance (PubMed:12718872). As part of the NPC Nup107-160 subcomplex plays a role in RNA export and in tethering NUP96/Nup98 and NUP153 to the nucleus (PubMed:12718872). The Nup107-160 complex seems to be required for spindle assembly during mitosis (PubMed:16807356). NUP85 is required for membrane clustering of CCL2-activated CCR2 (PubMed:15995708). Seems to be involved in CCR2-mediated chemotaxis of monocytes and may link activated CCR2 to the phosphatidyl-inositol 3-kinase-Rac-lammellipodium protrusion cascade (PubMed:15995708). Involved in nephrogenesis (PubMed:30179222).</text>
</comment>
<comment type="subunit">
    <text evidence="2 3 4 5 7">Component of the nuclear pore complex (NPC) (PubMed:12196509). Component of the NPC Nup107-160 subcomplex, consisting of at least NUP107, NUP98/Nup96, NUP160, NUP133, NUP85, NUP37, NUP43 and SEC13 (PubMed:15146057). Interacts with NUP160, NUP133 and SEC13 (PubMed:12718872, PubMed:30179222). Interacts with NUP37, NUP107 and NUP43 (PubMed:15146057). Interacts with CCR2 (PubMed:15995708).</text>
</comment>
<comment type="interaction">
    <interactant intactId="EBI-716392">
        <id>Q9BW27</id>
    </interactant>
    <interactant intactId="EBI-14807859">
        <id>P41597-2</id>
        <label>CCR2</label>
    </interactant>
    <organismsDiffer>false</organismsDiffer>
    <experiments>3</experiments>
</comment>
<comment type="interaction">
    <interactant intactId="EBI-716392">
        <id>Q9BW27</id>
    </interactant>
    <interactant intactId="EBI-711823">
        <id>Q7L5D6</id>
        <label>GET4</label>
    </interactant>
    <organismsDiffer>false</organismsDiffer>
    <experiments>3</experiments>
</comment>
<comment type="interaction">
    <interactant intactId="EBI-716392">
        <id>Q9BW27</id>
    </interactant>
    <interactant intactId="EBI-295695">
        <id>Q8WUM0</id>
        <label>NUP133</label>
    </interactant>
    <organismsDiffer>false</organismsDiffer>
    <experiments>5</experiments>
</comment>
<comment type="interaction">
    <interactant intactId="EBI-716392">
        <id>Q9BW27</id>
    </interactant>
    <interactant intactId="EBI-295715">
        <id>Q12769</id>
        <label>NUP160</label>
    </interactant>
    <organismsDiffer>false</organismsDiffer>
    <experiments>3</experiments>
</comment>
<comment type="interaction">
    <interactant intactId="EBI-716392">
        <id>Q9BW27</id>
    </interactant>
    <interactant intactId="EBI-922818">
        <id>Q96EE3</id>
        <label>SEH1L</label>
    </interactant>
    <organismsDiffer>false</organismsDiffer>
    <experiments>3</experiments>
</comment>
<comment type="subcellular location">
    <subcellularLocation>
        <location evidence="2 3">Nucleus</location>
        <location evidence="2 3">Nuclear pore complex</location>
    </subcellularLocation>
    <subcellularLocation>
        <location evidence="3 4 6">Chromosome</location>
        <location evidence="3 4 6">Centromere</location>
        <location evidence="3 4 6">Kinetochore</location>
    </subcellularLocation>
    <subcellularLocation>
        <location evidence="6">Cytoplasm</location>
        <location evidence="6">Cytoskeleton</location>
        <location evidence="6">Spindle</location>
    </subcellularLocation>
    <subcellularLocation>
        <location evidence="5">Cytoplasm</location>
    </subcellularLocation>
    <subcellularLocation>
        <location evidence="2">Nucleus membrane</location>
    </subcellularLocation>
    <text evidence="3 5 6">During mitosis, localizes to the kinetochores and spindle poles (PubMed:12718872, PubMed:16807356). Upon CCl2 stimulation translocates from the cytoplasm to the membrane and colocalizes with CCR2 at the front of migrating cells (PubMed:15995708).</text>
</comment>
<comment type="alternative products">
    <event type="alternative splicing"/>
    <isoform>
        <id>Q9BW27-1</id>
        <name>1</name>
        <sequence type="displayed"/>
    </isoform>
    <isoform>
        <id>Q9BW27-2</id>
        <name>2</name>
        <sequence type="described" ref="VSP_056080 VSP_056081 VSP_056082"/>
    </isoform>
    <isoform>
        <id>Q9BW27-3</id>
        <name>3</name>
        <sequence type="described" ref="VSP_056079"/>
    </isoform>
</comment>
<comment type="disease" evidence="7">
    <disease id="DI-05378">
        <name>Nephrotic syndrome 17</name>
        <acronym>NPHS17</acronym>
        <description>A form of nephrotic syndrome, a renal disease clinically characterized by severe proteinuria, resulting in complications such as hypoalbuminemia, hyperlipidemia and edema. Kidney biopsies show non-specific histologic changes such as focal segmental glomerulosclerosis and diffuse mesangial proliferation. Some affected individuals have an inherited steroid-resistant form that progresses to end-stage renal failure. NPHS17 is an autosomal recessive, steroid-resistant progressive form with onset in the first decade of life.</description>
        <dbReference type="MIM" id="618176"/>
    </disease>
    <text>The disease is caused by variants affecting the gene represented in this entry.</text>
</comment>
<comment type="similarity">
    <text evidence="9">Belongs to the nucleoporin Nup85 family.</text>
</comment>
<comment type="sequence caution" evidence="9">
    <conflict type="erroneous initiation">
        <sequence resource="EMBL-CDS" id="CAD38749"/>
    </conflict>
    <text>Truncated N-terminus.</text>
</comment>
<organism>
    <name type="scientific">Homo sapiens</name>
    <name type="common">Human</name>
    <dbReference type="NCBI Taxonomy" id="9606"/>
    <lineage>
        <taxon>Eukaryota</taxon>
        <taxon>Metazoa</taxon>
        <taxon>Chordata</taxon>
        <taxon>Craniata</taxon>
        <taxon>Vertebrata</taxon>
        <taxon>Euteleostomi</taxon>
        <taxon>Mammalia</taxon>
        <taxon>Eutheria</taxon>
        <taxon>Euarchontoglires</taxon>
        <taxon>Primates</taxon>
        <taxon>Haplorrhini</taxon>
        <taxon>Catarrhini</taxon>
        <taxon>Hominidae</taxon>
        <taxon>Homo</taxon>
    </lineage>
</organism>
<proteinExistence type="evidence at protein level"/>